<keyword id="KW-0028">Amino-acid biosynthesis</keyword>
<keyword id="KW-0963">Cytoplasm</keyword>
<keyword id="KW-0368">Histidine biosynthesis</keyword>
<keyword id="KW-1185">Reference proteome</keyword>
<comment type="function">
    <text evidence="1">Required for the first step of histidine biosynthesis. May allow the feedback regulation of ATP phosphoribosyltransferase activity by histidine.</text>
</comment>
<comment type="pathway">
    <text evidence="1">Amino-acid biosynthesis; L-histidine biosynthesis; L-histidine from 5-phospho-alpha-D-ribose 1-diphosphate: step 1/9.</text>
</comment>
<comment type="subunit">
    <text evidence="1">Heteromultimer composed of HisG and HisZ subunits.</text>
</comment>
<comment type="subcellular location">
    <subcellularLocation>
        <location evidence="1">Cytoplasm</location>
    </subcellularLocation>
</comment>
<comment type="miscellaneous">
    <text>This function is generally fulfilled by the C-terminal part of HisG, which is missing in some bacteria such as this one.</text>
</comment>
<comment type="similarity">
    <text evidence="1">Belongs to the class-II aminoacyl-tRNA synthetase family. HisZ subfamily.</text>
</comment>
<evidence type="ECO:0000255" key="1">
    <source>
        <dbReference type="HAMAP-Rule" id="MF_00125"/>
    </source>
</evidence>
<accession>B3PDB6</accession>
<name>HISZ_CELJU</name>
<organism>
    <name type="scientific">Cellvibrio japonicus (strain Ueda107)</name>
    <name type="common">Pseudomonas fluorescens subsp. cellulosa</name>
    <dbReference type="NCBI Taxonomy" id="498211"/>
    <lineage>
        <taxon>Bacteria</taxon>
        <taxon>Pseudomonadati</taxon>
        <taxon>Pseudomonadota</taxon>
        <taxon>Gammaproteobacteria</taxon>
        <taxon>Cellvibrionales</taxon>
        <taxon>Cellvibrionaceae</taxon>
        <taxon>Cellvibrio</taxon>
    </lineage>
</organism>
<dbReference type="EMBL" id="CP000934">
    <property type="protein sequence ID" value="ACE82797.1"/>
    <property type="molecule type" value="Genomic_DNA"/>
</dbReference>
<dbReference type="SMR" id="B3PDB6"/>
<dbReference type="STRING" id="498211.CJA_3074"/>
<dbReference type="KEGG" id="cja:CJA_3074"/>
<dbReference type="eggNOG" id="COG3705">
    <property type="taxonomic scope" value="Bacteria"/>
</dbReference>
<dbReference type="HOGENOM" id="CLU_025113_0_1_6"/>
<dbReference type="OrthoDB" id="9769617at2"/>
<dbReference type="UniPathway" id="UPA00031">
    <property type="reaction ID" value="UER00006"/>
</dbReference>
<dbReference type="Proteomes" id="UP000001036">
    <property type="component" value="Chromosome"/>
</dbReference>
<dbReference type="GO" id="GO:0005737">
    <property type="term" value="C:cytoplasm"/>
    <property type="evidence" value="ECO:0007669"/>
    <property type="project" value="UniProtKB-SubCell"/>
</dbReference>
<dbReference type="GO" id="GO:0004821">
    <property type="term" value="F:histidine-tRNA ligase activity"/>
    <property type="evidence" value="ECO:0007669"/>
    <property type="project" value="TreeGrafter"/>
</dbReference>
<dbReference type="GO" id="GO:0006427">
    <property type="term" value="P:histidyl-tRNA aminoacylation"/>
    <property type="evidence" value="ECO:0007669"/>
    <property type="project" value="TreeGrafter"/>
</dbReference>
<dbReference type="GO" id="GO:0000105">
    <property type="term" value="P:L-histidine biosynthetic process"/>
    <property type="evidence" value="ECO:0007669"/>
    <property type="project" value="UniProtKB-UniRule"/>
</dbReference>
<dbReference type="CDD" id="cd00773">
    <property type="entry name" value="HisRS-like_core"/>
    <property type="match status" value="1"/>
</dbReference>
<dbReference type="Gene3D" id="3.30.930.10">
    <property type="entry name" value="Bira Bifunctional Protein, Domain 2"/>
    <property type="match status" value="1"/>
</dbReference>
<dbReference type="HAMAP" id="MF_00125">
    <property type="entry name" value="HisZ"/>
    <property type="match status" value="1"/>
</dbReference>
<dbReference type="InterPro" id="IPR045864">
    <property type="entry name" value="aa-tRNA-synth_II/BPL/LPL"/>
</dbReference>
<dbReference type="InterPro" id="IPR041715">
    <property type="entry name" value="HisRS-like_core"/>
</dbReference>
<dbReference type="InterPro" id="IPR004516">
    <property type="entry name" value="HisRS/HisZ"/>
</dbReference>
<dbReference type="InterPro" id="IPR004517">
    <property type="entry name" value="HisZ"/>
</dbReference>
<dbReference type="NCBIfam" id="TIGR00443">
    <property type="entry name" value="hisZ_biosyn_reg"/>
    <property type="match status" value="1"/>
</dbReference>
<dbReference type="NCBIfam" id="NF008935">
    <property type="entry name" value="PRK12292.1-1"/>
    <property type="match status" value="1"/>
</dbReference>
<dbReference type="NCBIfam" id="NF009086">
    <property type="entry name" value="PRK12421.1"/>
    <property type="match status" value="1"/>
</dbReference>
<dbReference type="PANTHER" id="PTHR43707:SF1">
    <property type="entry name" value="HISTIDINE--TRNA LIGASE, MITOCHONDRIAL-RELATED"/>
    <property type="match status" value="1"/>
</dbReference>
<dbReference type="PANTHER" id="PTHR43707">
    <property type="entry name" value="HISTIDYL-TRNA SYNTHETASE"/>
    <property type="match status" value="1"/>
</dbReference>
<dbReference type="Pfam" id="PF13393">
    <property type="entry name" value="tRNA-synt_His"/>
    <property type="match status" value="1"/>
</dbReference>
<dbReference type="SUPFAM" id="SSF55681">
    <property type="entry name" value="Class II aaRS and biotin synthetases"/>
    <property type="match status" value="1"/>
</dbReference>
<reference key="1">
    <citation type="journal article" date="2008" name="J. Bacteriol.">
        <title>Insights into plant cell wall degradation from the genome sequence of the soil bacterium Cellvibrio japonicus.</title>
        <authorList>
            <person name="DeBoy R.T."/>
            <person name="Mongodin E.F."/>
            <person name="Fouts D.E."/>
            <person name="Tailford L.E."/>
            <person name="Khouri H."/>
            <person name="Emerson J.B."/>
            <person name="Mohamoud Y."/>
            <person name="Watkins K."/>
            <person name="Henrissat B."/>
            <person name="Gilbert H.J."/>
            <person name="Nelson K.E."/>
        </authorList>
    </citation>
    <scope>NUCLEOTIDE SEQUENCE [LARGE SCALE GENOMIC DNA]</scope>
    <source>
        <strain>Ueda107</strain>
    </source>
</reference>
<sequence length="396" mass="43302">MVRVVMTYADRWLLPEGVEEILPGEAKAIDSLRRKLLDLYSAWGYDMVIPPLLEYTDSLLTGSGRDIDLLTLKVTDQLSGRTLGIRADITPQTARMDAHSFNRQGANRLCYAGHVVHARPKNPLATRTPIQAGIEFYGEADLAADIEVVSLLLESLQVAGLPRLHIDLGHVGIYRAIANDAGLTTAQEQEFFELLQRKAVTEIHAWVEANIPSADKAAAFILLPSLAGGIEVLDRARSQFAHLPQVIDALDHLQQLAAVVMARYPSAELYFDLGEVRGYHYLTGIVFAAFAPGYGNPIASGGRYDHIGEVFGRARPATGFAVDITALSKLGFIGQHDVSAIAVEVNQDPQQWAAIKALRARGERVIQLTPAGQLAELKCDRQLLLLDGKYQVVPLQ</sequence>
<gene>
    <name evidence="1" type="primary">hisZ</name>
    <name type="ordered locus">CJA_3074</name>
</gene>
<protein>
    <recommendedName>
        <fullName evidence="1">ATP phosphoribosyltransferase regulatory subunit</fullName>
    </recommendedName>
</protein>
<proteinExistence type="inferred from homology"/>
<feature type="chain" id="PRO_1000095454" description="ATP phosphoribosyltransferase regulatory subunit">
    <location>
        <begin position="1"/>
        <end position="396"/>
    </location>
</feature>